<sequence>MMKTLVVVLSLSLTILSFGGAHAATISFKNNCPYMVWPGTLTSDQKPQLSTTGFELASQASFQLDTPVPWNGRFWARTGCSTDASGKFVCATADCASGQVMCNGNGAIPPATLAEFNIPAGGGQDFYDVSLVDGFNLPMSVTPQGGTGDCKTASCPANVNAVCPSELQKKGSDGSVVACLSACVKFGTPQYCCTPPQNTPETCPPTNYSEIFHNACPDAYSYAYDDKRGTFTCNGGPNYAITFCP</sequence>
<organism>
    <name type="scientific">Prunus avium</name>
    <name type="common">Cherry</name>
    <name type="synonym">Cerasus avium</name>
    <dbReference type="NCBI Taxonomy" id="42229"/>
    <lineage>
        <taxon>Eukaryota</taxon>
        <taxon>Viridiplantae</taxon>
        <taxon>Streptophyta</taxon>
        <taxon>Embryophyta</taxon>
        <taxon>Tracheophyta</taxon>
        <taxon>Spermatophyta</taxon>
        <taxon>Magnoliopsida</taxon>
        <taxon>eudicotyledons</taxon>
        <taxon>Gunneridae</taxon>
        <taxon>Pentapetalae</taxon>
        <taxon>rosids</taxon>
        <taxon>fabids</taxon>
        <taxon>Rosales</taxon>
        <taxon>Rosaceae</taxon>
        <taxon>Amygdaloideae</taxon>
        <taxon>Amygdaleae</taxon>
        <taxon>Prunus</taxon>
    </lineage>
</organism>
<accession>P50694</accession>
<dbReference type="EC" id="3.2.1.39"/>
<dbReference type="EMBL" id="U32440">
    <property type="protein sequence ID" value="AAB38064.1"/>
    <property type="molecule type" value="mRNA"/>
</dbReference>
<dbReference type="PDB" id="2AHN">
    <property type="method" value="X-ray"/>
    <property type="resolution" value="1.30 A"/>
    <property type="chains" value="A=24-245"/>
</dbReference>
<dbReference type="PDBsum" id="2AHN"/>
<dbReference type="SMR" id="P50694"/>
<dbReference type="Allergome" id="3448">
    <property type="allergen name" value="Pru av 2.0101"/>
</dbReference>
<dbReference type="Allergome" id="598">
    <property type="allergen name" value="Pru av 2"/>
</dbReference>
<dbReference type="EvolutionaryTrace" id="P50694"/>
<dbReference type="Proteomes" id="UP000515124">
    <property type="component" value="Unplaced"/>
</dbReference>
<dbReference type="GO" id="GO:0005576">
    <property type="term" value="C:extracellular region"/>
    <property type="evidence" value="ECO:0007669"/>
    <property type="project" value="UniProtKB-SubCell"/>
</dbReference>
<dbReference type="GO" id="GO:0042973">
    <property type="term" value="F:glucan endo-1,3-beta-D-glucosidase activity"/>
    <property type="evidence" value="ECO:0007669"/>
    <property type="project" value="UniProtKB-EC"/>
</dbReference>
<dbReference type="GO" id="GO:0019863">
    <property type="term" value="F:IgE binding"/>
    <property type="evidence" value="ECO:0007669"/>
    <property type="project" value="UniProtKB-KW"/>
</dbReference>
<dbReference type="CDD" id="cd09218">
    <property type="entry name" value="TLP-PA"/>
    <property type="match status" value="1"/>
</dbReference>
<dbReference type="FunFam" id="2.60.110.10:FF:000002">
    <property type="entry name" value="Thaumatin-like protein 1a"/>
    <property type="match status" value="1"/>
</dbReference>
<dbReference type="Gene3D" id="2.60.110.10">
    <property type="entry name" value="Thaumatin"/>
    <property type="match status" value="1"/>
</dbReference>
<dbReference type="InterPro" id="IPR037176">
    <property type="entry name" value="Osmotin/thaumatin-like_sf"/>
</dbReference>
<dbReference type="InterPro" id="IPR001938">
    <property type="entry name" value="Thaumatin"/>
</dbReference>
<dbReference type="InterPro" id="IPR017949">
    <property type="entry name" value="Thaumatin_CS"/>
</dbReference>
<dbReference type="PANTHER" id="PTHR31048">
    <property type="entry name" value="OS03G0233200 PROTEIN"/>
    <property type="match status" value="1"/>
</dbReference>
<dbReference type="Pfam" id="PF00314">
    <property type="entry name" value="Thaumatin"/>
    <property type="match status" value="1"/>
</dbReference>
<dbReference type="PIRSF" id="PIRSF002703">
    <property type="entry name" value="Thaumatin"/>
    <property type="match status" value="1"/>
</dbReference>
<dbReference type="PRINTS" id="PR00347">
    <property type="entry name" value="THAUMATIN"/>
</dbReference>
<dbReference type="SMART" id="SM00205">
    <property type="entry name" value="THN"/>
    <property type="match status" value="1"/>
</dbReference>
<dbReference type="SUPFAM" id="SSF49870">
    <property type="entry name" value="Osmotin, thaumatin-like protein"/>
    <property type="match status" value="1"/>
</dbReference>
<dbReference type="PROSITE" id="PS00316">
    <property type="entry name" value="THAUMATIN_1"/>
    <property type="match status" value="1"/>
</dbReference>
<dbReference type="PROSITE" id="PS51367">
    <property type="entry name" value="THAUMATIN_2"/>
    <property type="match status" value="1"/>
</dbReference>
<protein>
    <recommendedName>
        <fullName>Glucan endo-1,3-beta-glucosidase</fullName>
        <ecNumber>3.2.1.39</ecNumber>
    </recommendedName>
    <alternativeName>
        <fullName>(1-&gt;3)-beta-glucan endohydrolase</fullName>
        <shortName>(1-&gt;3)-beta-glucanase</shortName>
    </alternativeName>
    <alternativeName>
        <fullName>Allergen Pru a 2</fullName>
    </alternativeName>
    <alternativeName>
        <fullName>Beta-1,3-endoglucanase</fullName>
    </alternativeName>
    <alternativeName>
        <fullName>Thaumatin-like protein</fullName>
        <shortName>TLP</shortName>
    </alternativeName>
    <allergenName>Pru av 2</allergenName>
</protein>
<feature type="signal peptide" evidence="4">
    <location>
        <begin position="1"/>
        <end position="23"/>
    </location>
</feature>
<feature type="chain" id="PRO_0000034021" description="Glucan endo-1,3-beta-glucosidase">
    <location>
        <begin position="24"/>
        <end position="245"/>
    </location>
</feature>
<feature type="disulfide bond" evidence="1 3">
    <location>
        <begin position="32"/>
        <end position="244"/>
    </location>
</feature>
<feature type="disulfide bond" evidence="1 3">
    <location>
        <begin position="80"/>
        <end position="90"/>
    </location>
</feature>
<feature type="disulfide bond" evidence="1 3">
    <location>
        <begin position="95"/>
        <end position="102"/>
    </location>
</feature>
<feature type="disulfide bond" evidence="1 3">
    <location>
        <begin position="150"/>
        <end position="233"/>
    </location>
</feature>
<feature type="disulfide bond" evidence="1 3">
    <location>
        <begin position="155"/>
        <end position="216"/>
    </location>
</feature>
<feature type="disulfide bond" evidence="1 3">
    <location>
        <begin position="163"/>
        <end position="179"/>
    </location>
</feature>
<feature type="disulfide bond" evidence="1 3">
    <location>
        <begin position="183"/>
        <end position="192"/>
    </location>
</feature>
<feature type="disulfide bond" evidence="1 3">
    <location>
        <begin position="193"/>
        <end position="203"/>
    </location>
</feature>
<feature type="strand" evidence="6">
    <location>
        <begin position="25"/>
        <end position="30"/>
    </location>
</feature>
<feature type="strand" evidence="6">
    <location>
        <begin position="32"/>
        <end position="34"/>
    </location>
</feature>
<feature type="strand" evidence="6">
    <location>
        <begin position="36"/>
        <end position="42"/>
    </location>
</feature>
<feature type="helix" evidence="6">
    <location>
        <begin position="43"/>
        <end position="45"/>
    </location>
</feature>
<feature type="strand" evidence="6">
    <location>
        <begin position="61"/>
        <end position="65"/>
    </location>
</feature>
<feature type="strand" evidence="6">
    <location>
        <begin position="68"/>
        <end position="82"/>
    </location>
</feature>
<feature type="strand" evidence="6">
    <location>
        <begin position="88"/>
        <end position="93"/>
    </location>
</feature>
<feature type="strand" evidence="6">
    <location>
        <begin position="97"/>
        <end position="101"/>
    </location>
</feature>
<feature type="strand" evidence="6">
    <location>
        <begin position="113"/>
        <end position="118"/>
    </location>
</feature>
<feature type="strand" evidence="6">
    <location>
        <begin position="124"/>
        <end position="130"/>
    </location>
</feature>
<feature type="strand" evidence="6">
    <location>
        <begin position="135"/>
        <end position="137"/>
    </location>
</feature>
<feature type="strand" evidence="6">
    <location>
        <begin position="139"/>
        <end position="145"/>
    </location>
</feature>
<feature type="strand" evidence="6">
    <location>
        <begin position="153"/>
        <end position="155"/>
    </location>
</feature>
<feature type="helix" evidence="6">
    <location>
        <begin position="159"/>
        <end position="162"/>
    </location>
</feature>
<feature type="helix" evidence="6">
    <location>
        <begin position="165"/>
        <end position="167"/>
    </location>
</feature>
<feature type="strand" evidence="6">
    <location>
        <begin position="168"/>
        <end position="170"/>
    </location>
</feature>
<feature type="strand" evidence="6">
    <location>
        <begin position="176"/>
        <end position="179"/>
    </location>
</feature>
<feature type="helix" evidence="6">
    <location>
        <begin position="182"/>
        <end position="186"/>
    </location>
</feature>
<feature type="helix" evidence="6">
    <location>
        <begin position="189"/>
        <end position="192"/>
    </location>
</feature>
<feature type="turn" evidence="6">
    <location>
        <begin position="200"/>
        <end position="202"/>
    </location>
</feature>
<feature type="helix" evidence="6">
    <location>
        <begin position="207"/>
        <end position="215"/>
    </location>
</feature>
<feature type="turn" evidence="6">
    <location>
        <begin position="226"/>
        <end position="229"/>
    </location>
</feature>
<feature type="strand" evidence="6">
    <location>
        <begin position="231"/>
        <end position="235"/>
    </location>
</feature>
<feature type="strand" evidence="6">
    <location>
        <begin position="238"/>
        <end position="243"/>
    </location>
</feature>
<comment type="catalytic activity">
    <reaction evidence="2">
        <text>Hydrolysis of (1-&gt;3)-beta-D-glucosidic linkages in (1-&gt;3)-beta-D-glucans.</text>
        <dbReference type="EC" id="3.2.1.39"/>
    </reaction>
</comment>
<comment type="subcellular location">
    <subcellularLocation>
        <location evidence="5">Secreted</location>
    </subcellularLocation>
</comment>
<comment type="tissue specificity">
    <text>Abundantly expressed in ripening fruit.</text>
</comment>
<comment type="allergen">
    <text evidence="4">Causes an allergic reaction in human. Binds IgE in 50% of cherry-allergic patients.</text>
</comment>
<comment type="miscellaneous">
    <text>Most abundant soluble protein in ripe cherries.</text>
</comment>
<comment type="similarity">
    <text evidence="1">Belongs to the thaumatin family.</text>
</comment>
<evidence type="ECO:0000255" key="1">
    <source>
        <dbReference type="PROSITE-ProRule" id="PRU00699"/>
    </source>
</evidence>
<evidence type="ECO:0000269" key="2">
    <source>
    </source>
</evidence>
<evidence type="ECO:0000269" key="3">
    <source>
    </source>
</evidence>
<evidence type="ECO:0000269" key="4">
    <source>
    </source>
</evidence>
<evidence type="ECO:0000305" key="5"/>
<evidence type="ECO:0007829" key="6">
    <source>
        <dbReference type="PDB" id="2AHN"/>
    </source>
</evidence>
<name>TLP_PRUAV</name>
<keyword id="KW-0002">3D-structure</keyword>
<keyword id="KW-0020">Allergen</keyword>
<keyword id="KW-0903">Direct protein sequencing</keyword>
<keyword id="KW-1015">Disulfide bond</keyword>
<keyword id="KW-0326">Glycosidase</keyword>
<keyword id="KW-0378">Hydrolase</keyword>
<keyword id="KW-0389">IgE-binding protein</keyword>
<keyword id="KW-1185">Reference proteome</keyword>
<keyword id="KW-0964">Secreted</keyword>
<keyword id="KW-0732">Signal</keyword>
<proteinExistence type="evidence at protein level"/>
<reference key="1">
    <citation type="journal article" date="1996" name="Plant Physiol.">
        <title>A cherry protein and its gene, abundantly expressed in ripening fruit, have been identified as thaumatin-like.</title>
        <authorList>
            <person name="Fils-Lycaon B.R."/>
            <person name="Wiersma P.A."/>
            <person name="Eastwell K.C."/>
            <person name="Sautiere P."/>
        </authorList>
    </citation>
    <scope>NUCLEOTIDE SEQUENCE [MRNA]</scope>
    <source>
        <strain>cv. Summit</strain>
        <tissue>Fruit</tissue>
    </source>
</reference>
<reference key="2">
    <citation type="journal article" date="1998" name="Int. Arch. Allergy Immunol.">
        <title>Biochemical characterization of Pru a 2, a 23-kD thaumatin-like protein representing a potential major allergen in cherry (Prunus avium).</title>
        <authorList>
            <person name="Inschlag C."/>
            <person name="Hoffmann-Sommergruber K."/>
            <person name="O'Riordain G."/>
            <person name="Ahorn H."/>
            <person name="Ebner C."/>
            <person name="Scheiner O."/>
            <person name="Breiteneder H."/>
        </authorList>
    </citation>
    <scope>PROTEIN SEQUENCE OF 24-45</scope>
    <scope>ALLERGEN</scope>
</reference>
<reference key="3">
    <citation type="journal article" date="2006" name="Clin. Exp. Allergy">
        <title>Natural and recombinant molecules of the cherry allergen Pru av 2 show diverse structural and B cell characteristics but similar T cell reactivity.</title>
        <authorList>
            <person name="Fuchs H.C."/>
            <person name="Bohle B."/>
            <person name="Dall'Antonia Y."/>
            <person name="Radauer C."/>
            <person name="Hoffmann-Sommergruber K."/>
            <person name="Mari A."/>
            <person name="Scheiner O."/>
            <person name="Keller W."/>
            <person name="Breiteneder H."/>
        </authorList>
    </citation>
    <scope>ENZYMATIC ACTIVITY</scope>
</reference>
<reference key="4">
    <citation type="journal article" date="2005" name="Acta Crystallogr. F">
        <title>Crystallization and preliminary structure determination of the plant food allergen Pru av 2.</title>
        <authorList>
            <person name="Dall'Antonia Y."/>
            <person name="Pavkov T."/>
            <person name="Fuchs H."/>
            <person name="Breiteneder H."/>
            <person name="Keller W."/>
        </authorList>
    </citation>
    <scope>X-RAY CRYSTALLOGRAPHY (1.6 ANGSTROMS) OF 24-245</scope>
    <scope>DISULFIDE BONDS</scope>
</reference>